<name>Y2971_CLOBJ</name>
<gene>
    <name type="ordered locus">CLM_2971</name>
</gene>
<keyword id="KW-0963">Cytoplasm</keyword>
<proteinExistence type="inferred from homology"/>
<feature type="chain" id="PRO_1000180972" description="UPF0291 protein CLM_2971">
    <location>
        <begin position="1"/>
        <end position="62"/>
    </location>
</feature>
<accession>C1FTL9</accession>
<sequence>MDMKKLIERINFLYKKSKEEGLTKEEKVEQQKLRREYIDIIKGNVKVQLEGVEKIPKPNRKN</sequence>
<reference key="1">
    <citation type="submission" date="2008-10" db="EMBL/GenBank/DDBJ databases">
        <title>Genome sequence of Clostridium botulinum A2 Kyoto.</title>
        <authorList>
            <person name="Shrivastava S."/>
            <person name="Brinkac L.M."/>
            <person name="Brown J.L."/>
            <person name="Bruce D."/>
            <person name="Detter C.C."/>
            <person name="Johnson E.A."/>
            <person name="Munk C.A."/>
            <person name="Smith L.A."/>
            <person name="Smith T.J."/>
            <person name="Sutton G."/>
            <person name="Brettin T.S."/>
        </authorList>
    </citation>
    <scope>NUCLEOTIDE SEQUENCE [LARGE SCALE GENOMIC DNA]</scope>
    <source>
        <strain>Kyoto / Type A2</strain>
    </source>
</reference>
<organism>
    <name type="scientific">Clostridium botulinum (strain Kyoto / Type A2)</name>
    <dbReference type="NCBI Taxonomy" id="536232"/>
    <lineage>
        <taxon>Bacteria</taxon>
        <taxon>Bacillati</taxon>
        <taxon>Bacillota</taxon>
        <taxon>Clostridia</taxon>
        <taxon>Eubacteriales</taxon>
        <taxon>Clostridiaceae</taxon>
        <taxon>Clostridium</taxon>
    </lineage>
</organism>
<comment type="subcellular location">
    <subcellularLocation>
        <location evidence="1">Cytoplasm</location>
    </subcellularLocation>
</comment>
<comment type="similarity">
    <text evidence="1">Belongs to the UPF0291 family.</text>
</comment>
<protein>
    <recommendedName>
        <fullName evidence="1">UPF0291 protein CLM_2971</fullName>
    </recommendedName>
</protein>
<dbReference type="EMBL" id="CP001581">
    <property type="protein sequence ID" value="ACO85974.1"/>
    <property type="molecule type" value="Genomic_DNA"/>
</dbReference>
<dbReference type="RefSeq" id="WP_003359104.1">
    <property type="nucleotide sequence ID" value="NC_012563.1"/>
</dbReference>
<dbReference type="SMR" id="C1FTL9"/>
<dbReference type="KEGG" id="cby:CLM_2971"/>
<dbReference type="eggNOG" id="COG4224">
    <property type="taxonomic scope" value="Bacteria"/>
</dbReference>
<dbReference type="HOGENOM" id="CLU_173137_3_1_9"/>
<dbReference type="Proteomes" id="UP000001374">
    <property type="component" value="Chromosome"/>
</dbReference>
<dbReference type="GO" id="GO:0005737">
    <property type="term" value="C:cytoplasm"/>
    <property type="evidence" value="ECO:0007669"/>
    <property type="project" value="UniProtKB-SubCell"/>
</dbReference>
<dbReference type="Gene3D" id="1.10.287.540">
    <property type="entry name" value="Helix hairpin bin"/>
    <property type="match status" value="1"/>
</dbReference>
<dbReference type="HAMAP" id="MF_01103">
    <property type="entry name" value="UPF0291"/>
    <property type="match status" value="1"/>
</dbReference>
<dbReference type="InterPro" id="IPR009242">
    <property type="entry name" value="DUF896"/>
</dbReference>
<dbReference type="PANTHER" id="PTHR37300">
    <property type="entry name" value="UPF0291 PROTEIN CBO2609/CLC_2481"/>
    <property type="match status" value="1"/>
</dbReference>
<dbReference type="PANTHER" id="PTHR37300:SF1">
    <property type="entry name" value="UPF0291 PROTEIN YNZC"/>
    <property type="match status" value="1"/>
</dbReference>
<dbReference type="Pfam" id="PF05979">
    <property type="entry name" value="DUF896"/>
    <property type="match status" value="1"/>
</dbReference>
<dbReference type="SUPFAM" id="SSF158221">
    <property type="entry name" value="YnzC-like"/>
    <property type="match status" value="1"/>
</dbReference>
<evidence type="ECO:0000255" key="1">
    <source>
        <dbReference type="HAMAP-Rule" id="MF_01103"/>
    </source>
</evidence>